<proteinExistence type="inferred from homology"/>
<feature type="chain" id="PRO_0000330130" description="Assembly factor CBP4">
    <location>
        <begin position="1"/>
        <end position="145"/>
    </location>
</feature>
<feature type="transmembrane region" description="Helical" evidence="2">
    <location>
        <begin position="10"/>
        <end position="28"/>
    </location>
</feature>
<feature type="coiled-coil region" evidence="2">
    <location>
        <begin position="107"/>
        <end position="132"/>
    </location>
</feature>
<reference key="1">
    <citation type="journal article" date="2009" name="Nature">
        <title>Evolution of pathogenicity and sexual reproduction in eight Candida genomes.</title>
        <authorList>
            <person name="Butler G."/>
            <person name="Rasmussen M.D."/>
            <person name="Lin M.F."/>
            <person name="Santos M.A.S."/>
            <person name="Sakthikumar S."/>
            <person name="Munro C.A."/>
            <person name="Rheinbay E."/>
            <person name="Grabherr M."/>
            <person name="Forche A."/>
            <person name="Reedy J.L."/>
            <person name="Agrafioti I."/>
            <person name="Arnaud M.B."/>
            <person name="Bates S."/>
            <person name="Brown A.J.P."/>
            <person name="Brunke S."/>
            <person name="Costanzo M.C."/>
            <person name="Fitzpatrick D.A."/>
            <person name="de Groot P.W.J."/>
            <person name="Harris D."/>
            <person name="Hoyer L.L."/>
            <person name="Hube B."/>
            <person name="Klis F.M."/>
            <person name="Kodira C."/>
            <person name="Lennard N."/>
            <person name="Logue M.E."/>
            <person name="Martin R."/>
            <person name="Neiman A.M."/>
            <person name="Nikolaou E."/>
            <person name="Quail M.A."/>
            <person name="Quinn J."/>
            <person name="Santos M.C."/>
            <person name="Schmitzberger F.F."/>
            <person name="Sherlock G."/>
            <person name="Shah P."/>
            <person name="Silverstein K.A.T."/>
            <person name="Skrzypek M.S."/>
            <person name="Soll D."/>
            <person name="Staggs R."/>
            <person name="Stansfield I."/>
            <person name="Stumpf M.P.H."/>
            <person name="Sudbery P.E."/>
            <person name="Srikantha T."/>
            <person name="Zeng Q."/>
            <person name="Berman J."/>
            <person name="Berriman M."/>
            <person name="Heitman J."/>
            <person name="Gow N.A.R."/>
            <person name="Lorenz M.C."/>
            <person name="Birren B.W."/>
            <person name="Kellis M."/>
            <person name="Cuomo C.A."/>
        </authorList>
    </citation>
    <scope>NUCLEOTIDE SEQUENCE [LARGE SCALE GENOMIC DNA]</scope>
    <source>
        <strain>ATCC 11503 / BCRC 21390 / CBS 2605 / JCM 1781 / NBRC 1676 / NRRL YB-4239</strain>
    </source>
</reference>
<gene>
    <name type="primary">CBP4</name>
    <name type="ORF">LELG_00654</name>
</gene>
<organism>
    <name type="scientific">Lodderomyces elongisporus (strain ATCC 11503 / CBS 2605 / JCM 1781 / NBRC 1676 / NRRL YB-4239)</name>
    <name type="common">Yeast</name>
    <name type="synonym">Saccharomyces elongisporus</name>
    <dbReference type="NCBI Taxonomy" id="379508"/>
    <lineage>
        <taxon>Eukaryota</taxon>
        <taxon>Fungi</taxon>
        <taxon>Dikarya</taxon>
        <taxon>Ascomycota</taxon>
        <taxon>Saccharomycotina</taxon>
        <taxon>Pichiomycetes</taxon>
        <taxon>Debaryomycetaceae</taxon>
        <taxon>Candida/Lodderomyces clade</taxon>
        <taxon>Lodderomyces</taxon>
    </lineage>
</organism>
<keyword id="KW-0143">Chaperone</keyword>
<keyword id="KW-0175">Coiled coil</keyword>
<keyword id="KW-0472">Membrane</keyword>
<keyword id="KW-0496">Mitochondrion</keyword>
<keyword id="KW-0999">Mitochondrion inner membrane</keyword>
<keyword id="KW-1185">Reference proteome</keyword>
<keyword id="KW-0812">Transmembrane</keyword>
<keyword id="KW-1133">Transmembrane helix</keyword>
<name>CBP4_LODEL</name>
<protein>
    <recommendedName>
        <fullName>Assembly factor CBP4</fullName>
    </recommendedName>
    <alternativeName>
        <fullName>Cytochrome b mRNA-processing protein 4</fullName>
    </alternativeName>
</protein>
<comment type="function">
    <text evidence="1">Essential for the assembly of ubiquinol-cytochrome c reductase. It has a direct effect on the correct occurrence of the Rieske protein, core 4, core 5 and apocytochrome b (By similarity).</text>
</comment>
<comment type="subcellular location">
    <subcellularLocation>
        <location evidence="1">Mitochondrion inner membrane</location>
        <topology evidence="1">Single-pass membrane protein</topology>
    </subcellularLocation>
</comment>
<comment type="similarity">
    <text evidence="3">Belongs to the CBP4 family.</text>
</comment>
<dbReference type="EMBL" id="CH981524">
    <property type="protein sequence ID" value="EDK42476.1"/>
    <property type="molecule type" value="Genomic_DNA"/>
</dbReference>
<dbReference type="RefSeq" id="XP_001528134.1">
    <property type="nucleotide sequence ID" value="XM_001528084.1"/>
</dbReference>
<dbReference type="SMR" id="A5DTG8"/>
<dbReference type="FunCoup" id="A5DTG8">
    <property type="interactions" value="41"/>
</dbReference>
<dbReference type="STRING" id="379508.A5DTG8"/>
<dbReference type="GeneID" id="5235658"/>
<dbReference type="KEGG" id="lel:PVL30_000632"/>
<dbReference type="eggNOG" id="ENOG502S2G8">
    <property type="taxonomic scope" value="Eukaryota"/>
</dbReference>
<dbReference type="HOGENOM" id="CLU_147520_0_0_1"/>
<dbReference type="InParanoid" id="A5DTG8"/>
<dbReference type="OMA" id="KDPIWKT"/>
<dbReference type="OrthoDB" id="5576752at2759"/>
<dbReference type="Proteomes" id="UP000001996">
    <property type="component" value="Unassembled WGS sequence"/>
</dbReference>
<dbReference type="GO" id="GO:0005743">
    <property type="term" value="C:mitochondrial inner membrane"/>
    <property type="evidence" value="ECO:0007669"/>
    <property type="project" value="UniProtKB-SubCell"/>
</dbReference>
<dbReference type="GO" id="GO:0034551">
    <property type="term" value="P:mitochondrial respiratory chain complex III assembly"/>
    <property type="evidence" value="ECO:0007669"/>
    <property type="project" value="TreeGrafter"/>
</dbReference>
<dbReference type="InterPro" id="IPR012420">
    <property type="entry name" value="Cbp4"/>
</dbReference>
<dbReference type="PANTHER" id="PTHR28202">
    <property type="entry name" value="ASSEMBLY FACTOR CBP4"/>
    <property type="match status" value="1"/>
</dbReference>
<dbReference type="PANTHER" id="PTHR28202:SF1">
    <property type="entry name" value="ASSEMBLY FACTOR CBP4"/>
    <property type="match status" value="1"/>
</dbReference>
<dbReference type="Pfam" id="PF07960">
    <property type="entry name" value="CBP4"/>
    <property type="match status" value="1"/>
</dbReference>
<evidence type="ECO:0000250" key="1"/>
<evidence type="ECO:0000255" key="2"/>
<evidence type="ECO:0000305" key="3"/>
<accession>A5DTG8</accession>
<sequence>MAEKPLWYRWARVYFAGGCLVGLGVVLYKTIRPTDEELISRFSPEIRAEYERNKELRQKEQQRLMEIVKKTSASTDPIWKTGPIGSPLEKDQRNLSMQLVDQELFHKTKEEEKQKAEINKSVEEGKEVERLLRENKNQKSWWKFW</sequence>